<proteinExistence type="inferred from homology"/>
<organism>
    <name type="scientific">Equine herpesvirus 1 (strain Ab4p)</name>
    <name type="common">EHV-1</name>
    <name type="synonym">Equine abortion virus</name>
    <dbReference type="NCBI Taxonomy" id="31520"/>
    <lineage>
        <taxon>Viruses</taxon>
        <taxon>Duplodnaviria</taxon>
        <taxon>Heunggongvirae</taxon>
        <taxon>Peploviricota</taxon>
        <taxon>Herviviricetes</taxon>
        <taxon>Herpesvirales</taxon>
        <taxon>Orthoherpesviridae</taxon>
        <taxon>Alphaherpesvirinae</taxon>
        <taxon>Varicellovirus</taxon>
        <taxon>Varicellovirus equidalpha1</taxon>
        <taxon>Equid alphaherpesvirus 1</taxon>
    </lineage>
</organism>
<keyword id="KW-0167">Capsid protein</keyword>
<keyword id="KW-1048">Host nucleus</keyword>
<keyword id="KW-1185">Reference proteome</keyword>
<keyword id="KW-0946">Virion</keyword>
<accession>P28921</accession>
<reference key="1">
    <citation type="journal article" date="1992" name="Virology">
        <title>The DNA sequence of equine herpesvirus-1.</title>
        <authorList>
            <person name="Telford E.A.R."/>
            <person name="Watson M.S."/>
            <person name="McBride K."/>
            <person name="Davison A.J."/>
        </authorList>
    </citation>
    <scope>NUCLEOTIDE SEQUENCE [LARGE SCALE GENOMIC DNA]</scope>
</reference>
<evidence type="ECO:0000255" key="1">
    <source>
        <dbReference type="HAMAP-Rule" id="MF_04019"/>
    </source>
</evidence>
<sequence>MASAAFEIDILLPSDLSPADLSALQKCEGKLVFLTALRRRVMLSSVTLSSYYVNGAPPDTLSLMAAFRRRFPAIIQRVLPNKMIAAALGVAPLPPGAFIQNTGPFDLCNGDSVCALPPILDVEDKLRLGSVGEEILFPLTVPLAQARELIARLVARAVQALTPNAQAQRGAEVMFYNGRKYNVTPDLRHRDAVNGVARSLVLNMIFAMNEGSLVLLSLIPNLLTLGTQDGFVNAIIQMGSATREVGQLVHQQPVPQPQDGARRFCVYDALMSWISVASRLGDVVGGKPLVRICTFEGQATISRGEKAPVIQTLL</sequence>
<protein>
    <recommendedName>
        <fullName evidence="1">Triplex capsid protein 2</fullName>
    </recommendedName>
</protein>
<dbReference type="EMBL" id="AY665713">
    <property type="protein sequence ID" value="AAT67301.1"/>
    <property type="molecule type" value="Genomic_DNA"/>
</dbReference>
<dbReference type="PIR" id="I36799">
    <property type="entry name" value="WZBED7"/>
</dbReference>
<dbReference type="SMR" id="P28921"/>
<dbReference type="KEGG" id="vg:1487527"/>
<dbReference type="Proteomes" id="UP000001189">
    <property type="component" value="Segment"/>
</dbReference>
<dbReference type="GO" id="GO:0042025">
    <property type="term" value="C:host cell nucleus"/>
    <property type="evidence" value="ECO:0007669"/>
    <property type="project" value="UniProtKB-SubCell"/>
</dbReference>
<dbReference type="GO" id="GO:0019028">
    <property type="term" value="C:viral capsid"/>
    <property type="evidence" value="ECO:0007669"/>
    <property type="project" value="UniProtKB-KW"/>
</dbReference>
<dbReference type="GO" id="GO:0005198">
    <property type="term" value="F:structural molecule activity"/>
    <property type="evidence" value="ECO:0007669"/>
    <property type="project" value="InterPro"/>
</dbReference>
<dbReference type="HAMAP" id="MF_04019">
    <property type="entry name" value="HSV_TRX2"/>
    <property type="match status" value="1"/>
</dbReference>
<dbReference type="InterPro" id="IPR002690">
    <property type="entry name" value="Herpes_capsid_2"/>
</dbReference>
<dbReference type="Pfam" id="PF01802">
    <property type="entry name" value="Herpes_V23"/>
    <property type="match status" value="1"/>
</dbReference>
<comment type="function">
    <text evidence="1">Structural component of the T=16 icosahedral capsid. The capsid is composed of pentamers and hexamers of major capsid protein/MCP, which are linked together by heterotrimers called triplexes. These triplexes are formed by a single molecule of triplex protein 1/TRX1 and two copies of triplex protein 2/TRX2. Additionally, TRX1 is required for efficient transport of TRX2 to the nucleus, which is the site of capsid assembly.</text>
</comment>
<comment type="subunit">
    <text evidence="1">Interacts with TRX1 and major capisd protein/MCP.</text>
</comment>
<comment type="subcellular location">
    <subcellularLocation>
        <location evidence="1">Virion</location>
    </subcellularLocation>
    <subcellularLocation>
        <location evidence="1">Host nucleus</location>
    </subcellularLocation>
</comment>
<comment type="similarity">
    <text evidence="1">Belongs to the herpesviridae TRX2 protein family.</text>
</comment>
<organismHost>
    <name type="scientific">Equus caballus</name>
    <name type="common">Horse</name>
    <dbReference type="NCBI Taxonomy" id="9796"/>
</organismHost>
<name>TRX2_EHV1B</name>
<feature type="chain" id="PRO_0000115726" description="Triplex capsid protein 2">
    <location>
        <begin position="1"/>
        <end position="314"/>
    </location>
</feature>
<gene>
    <name evidence="1" type="primary">TRX2</name>
    <name type="ordered locus">43</name>
</gene>